<name>PROA_VIBPA</name>
<evidence type="ECO:0000255" key="1">
    <source>
        <dbReference type="HAMAP-Rule" id="MF_00412"/>
    </source>
</evidence>
<accession>Q87RU9</accession>
<protein>
    <recommendedName>
        <fullName evidence="1">Gamma-glutamyl phosphate reductase</fullName>
        <shortName evidence="1">GPR</shortName>
        <ecNumber evidence="1">1.2.1.41</ecNumber>
    </recommendedName>
    <alternativeName>
        <fullName evidence="1">Glutamate-5-semialdehyde dehydrogenase</fullName>
    </alternativeName>
    <alternativeName>
        <fullName evidence="1">Glutamyl-gamma-semialdehyde dehydrogenase</fullName>
        <shortName evidence="1">GSA dehydrogenase</shortName>
    </alternativeName>
</protein>
<organism>
    <name type="scientific">Vibrio parahaemolyticus serotype O3:K6 (strain RIMD 2210633)</name>
    <dbReference type="NCBI Taxonomy" id="223926"/>
    <lineage>
        <taxon>Bacteria</taxon>
        <taxon>Pseudomonadati</taxon>
        <taxon>Pseudomonadota</taxon>
        <taxon>Gammaproteobacteria</taxon>
        <taxon>Vibrionales</taxon>
        <taxon>Vibrionaceae</taxon>
        <taxon>Vibrio</taxon>
    </lineage>
</organism>
<dbReference type="EC" id="1.2.1.41" evidence="1"/>
<dbReference type="EMBL" id="BA000031">
    <property type="protein sequence ID" value="BAC58940.1"/>
    <property type="molecule type" value="Genomic_DNA"/>
</dbReference>
<dbReference type="RefSeq" id="NP_797056.1">
    <property type="nucleotide sequence ID" value="NC_004603.1"/>
</dbReference>
<dbReference type="RefSeq" id="WP_005483082.1">
    <property type="nucleotide sequence ID" value="NC_004603.1"/>
</dbReference>
<dbReference type="SMR" id="Q87RU9"/>
<dbReference type="GeneID" id="1188152"/>
<dbReference type="KEGG" id="vpa:VP0677"/>
<dbReference type="PATRIC" id="fig|223926.6.peg.645"/>
<dbReference type="eggNOG" id="COG0014">
    <property type="taxonomic scope" value="Bacteria"/>
</dbReference>
<dbReference type="HOGENOM" id="CLU_030231_0_0_6"/>
<dbReference type="UniPathway" id="UPA00098">
    <property type="reaction ID" value="UER00360"/>
</dbReference>
<dbReference type="Proteomes" id="UP000002493">
    <property type="component" value="Chromosome 1"/>
</dbReference>
<dbReference type="GO" id="GO:0005737">
    <property type="term" value="C:cytoplasm"/>
    <property type="evidence" value="ECO:0007669"/>
    <property type="project" value="UniProtKB-SubCell"/>
</dbReference>
<dbReference type="GO" id="GO:0004350">
    <property type="term" value="F:glutamate-5-semialdehyde dehydrogenase activity"/>
    <property type="evidence" value="ECO:0007669"/>
    <property type="project" value="UniProtKB-UniRule"/>
</dbReference>
<dbReference type="GO" id="GO:0050661">
    <property type="term" value="F:NADP binding"/>
    <property type="evidence" value="ECO:0007669"/>
    <property type="project" value="InterPro"/>
</dbReference>
<dbReference type="GO" id="GO:0055129">
    <property type="term" value="P:L-proline biosynthetic process"/>
    <property type="evidence" value="ECO:0007669"/>
    <property type="project" value="UniProtKB-UniRule"/>
</dbReference>
<dbReference type="CDD" id="cd07079">
    <property type="entry name" value="ALDH_F18-19_ProA-GPR"/>
    <property type="match status" value="1"/>
</dbReference>
<dbReference type="FunFam" id="3.40.309.10:FF:000006">
    <property type="entry name" value="Gamma-glutamyl phosphate reductase"/>
    <property type="match status" value="1"/>
</dbReference>
<dbReference type="Gene3D" id="3.40.605.10">
    <property type="entry name" value="Aldehyde Dehydrogenase, Chain A, domain 1"/>
    <property type="match status" value="1"/>
</dbReference>
<dbReference type="Gene3D" id="3.40.309.10">
    <property type="entry name" value="Aldehyde Dehydrogenase, Chain A, domain 2"/>
    <property type="match status" value="1"/>
</dbReference>
<dbReference type="HAMAP" id="MF_00412">
    <property type="entry name" value="ProA"/>
    <property type="match status" value="1"/>
</dbReference>
<dbReference type="InterPro" id="IPR016161">
    <property type="entry name" value="Ald_DH/histidinol_DH"/>
</dbReference>
<dbReference type="InterPro" id="IPR016163">
    <property type="entry name" value="Ald_DH_C"/>
</dbReference>
<dbReference type="InterPro" id="IPR016162">
    <property type="entry name" value="Ald_DH_N"/>
</dbReference>
<dbReference type="InterPro" id="IPR015590">
    <property type="entry name" value="Aldehyde_DH_dom"/>
</dbReference>
<dbReference type="InterPro" id="IPR020593">
    <property type="entry name" value="G-glutamylP_reductase_CS"/>
</dbReference>
<dbReference type="InterPro" id="IPR012134">
    <property type="entry name" value="Glu-5-SA_DH"/>
</dbReference>
<dbReference type="InterPro" id="IPR000965">
    <property type="entry name" value="GPR_dom"/>
</dbReference>
<dbReference type="NCBIfam" id="NF001221">
    <property type="entry name" value="PRK00197.1"/>
    <property type="match status" value="1"/>
</dbReference>
<dbReference type="NCBIfam" id="TIGR00407">
    <property type="entry name" value="proA"/>
    <property type="match status" value="1"/>
</dbReference>
<dbReference type="PANTHER" id="PTHR11063:SF8">
    <property type="entry name" value="DELTA-1-PYRROLINE-5-CARBOXYLATE SYNTHASE"/>
    <property type="match status" value="1"/>
</dbReference>
<dbReference type="PANTHER" id="PTHR11063">
    <property type="entry name" value="GLUTAMATE SEMIALDEHYDE DEHYDROGENASE"/>
    <property type="match status" value="1"/>
</dbReference>
<dbReference type="Pfam" id="PF00171">
    <property type="entry name" value="Aldedh"/>
    <property type="match status" value="1"/>
</dbReference>
<dbReference type="PIRSF" id="PIRSF000151">
    <property type="entry name" value="GPR"/>
    <property type="match status" value="1"/>
</dbReference>
<dbReference type="SUPFAM" id="SSF53720">
    <property type="entry name" value="ALDH-like"/>
    <property type="match status" value="1"/>
</dbReference>
<dbReference type="PROSITE" id="PS01223">
    <property type="entry name" value="PROA"/>
    <property type="match status" value="1"/>
</dbReference>
<reference key="1">
    <citation type="journal article" date="2003" name="Lancet">
        <title>Genome sequence of Vibrio parahaemolyticus: a pathogenic mechanism distinct from that of V. cholerae.</title>
        <authorList>
            <person name="Makino K."/>
            <person name="Oshima K."/>
            <person name="Kurokawa K."/>
            <person name="Yokoyama K."/>
            <person name="Uda T."/>
            <person name="Tagomori K."/>
            <person name="Iijima Y."/>
            <person name="Najima M."/>
            <person name="Nakano M."/>
            <person name="Yamashita A."/>
            <person name="Kubota Y."/>
            <person name="Kimura S."/>
            <person name="Yasunaga T."/>
            <person name="Honda T."/>
            <person name="Shinagawa H."/>
            <person name="Hattori M."/>
            <person name="Iida T."/>
        </authorList>
    </citation>
    <scope>NUCLEOTIDE SEQUENCE [LARGE SCALE GENOMIC DNA]</scope>
    <source>
        <strain>RIMD 2210633</strain>
    </source>
</reference>
<proteinExistence type="inferred from homology"/>
<feature type="chain" id="PRO_0000189809" description="Gamma-glutamyl phosphate reductase">
    <location>
        <begin position="1"/>
        <end position="416"/>
    </location>
</feature>
<gene>
    <name evidence="1" type="primary">proA</name>
    <name type="ordered locus">VP0677</name>
</gene>
<comment type="function">
    <text evidence="1">Catalyzes the NADPH-dependent reduction of L-glutamate 5-phosphate into L-glutamate 5-semialdehyde and phosphate. The product spontaneously undergoes cyclization to form 1-pyrroline-5-carboxylate.</text>
</comment>
<comment type="catalytic activity">
    <reaction evidence="1">
        <text>L-glutamate 5-semialdehyde + phosphate + NADP(+) = L-glutamyl 5-phosphate + NADPH + H(+)</text>
        <dbReference type="Rhea" id="RHEA:19541"/>
        <dbReference type="ChEBI" id="CHEBI:15378"/>
        <dbReference type="ChEBI" id="CHEBI:43474"/>
        <dbReference type="ChEBI" id="CHEBI:57783"/>
        <dbReference type="ChEBI" id="CHEBI:58066"/>
        <dbReference type="ChEBI" id="CHEBI:58274"/>
        <dbReference type="ChEBI" id="CHEBI:58349"/>
        <dbReference type="EC" id="1.2.1.41"/>
    </reaction>
</comment>
<comment type="pathway">
    <text evidence="1">Amino-acid biosynthesis; L-proline biosynthesis; L-glutamate 5-semialdehyde from L-glutamate: step 2/2.</text>
</comment>
<comment type="subcellular location">
    <subcellularLocation>
        <location evidence="1">Cytoplasm</location>
    </subcellularLocation>
</comment>
<comment type="similarity">
    <text evidence="1">Belongs to the gamma-glutamyl phosphate reductase family.</text>
</comment>
<keyword id="KW-0028">Amino-acid biosynthesis</keyword>
<keyword id="KW-0963">Cytoplasm</keyword>
<keyword id="KW-0521">NADP</keyword>
<keyword id="KW-0560">Oxidoreductase</keyword>
<keyword id="KW-0641">Proline biosynthesis</keyword>
<sequence>MDLTNMGKAAKGAAFELATASTAQKNQALAIIADELEANSAAILAANAKDIELGREAGLTDALLDRLLLNEERLTGIANDVRNVISLNDPVGSEIDSKVLENGMSLSRRRVPLGVVGVIYEARPNVTIDIAALCLKTGNASILRGGKETFFSNMELVKVIQSALAKANLPAASVQYIEKPDRELVSQLLKLDDYVDMIIPRGGAGLHKMCKENSTIPVIIGGFGISHIFVDESADLEKSLNVVENSKVQRPSACNSLDTLLVHEKVAAKFLPMIVERMSDKVTFVAEPKAKALMAQATQIRDAVEGDFDTEWLSYTLGVKVVADVKEAIDHMRVHNASHSDAIMTNSLINSELFINSVGSAAVYVNAATRFTDGAQFGLGAEVAVSTQKLHARGPMGLEELTSYKWVGKANYLARS</sequence>